<keyword id="KW-0963">Cytoplasm</keyword>
<keyword id="KW-0378">Hydrolase</keyword>
<keyword id="KW-0645">Protease</keyword>
<keyword id="KW-0720">Serine protease</keyword>
<feature type="chain" id="PRO_0000236408" description="ATP-dependent Clp protease proteolytic subunit 3">
    <location>
        <begin position="1"/>
        <end position="200"/>
    </location>
</feature>
<feature type="active site" description="Nucleophile" evidence="1">
    <location>
        <position position="101"/>
    </location>
</feature>
<feature type="active site" evidence="1">
    <location>
        <position position="126"/>
    </location>
</feature>
<comment type="function">
    <text evidence="1">Cleaves peptides in various proteins in a process that requires ATP hydrolysis. Has a chymotrypsin-like activity. Plays a major role in the degradation of misfolded proteins.</text>
</comment>
<comment type="catalytic activity">
    <reaction evidence="1">
        <text>Hydrolysis of proteins to small peptides in the presence of ATP and magnesium. alpha-casein is the usual test substrate. In the absence of ATP, only oligopeptides shorter than five residues are hydrolyzed (such as succinyl-Leu-Tyr-|-NHMec, and Leu-Tyr-Leu-|-Tyr-Trp, in which cleavage of the -Tyr-|-Leu- and -Tyr-|-Trp bonds also occurs).</text>
        <dbReference type="EC" id="3.4.21.92"/>
    </reaction>
</comment>
<comment type="subunit">
    <text evidence="1">Fourteen ClpP subunits assemble into 2 heptameric rings which stack back to back to give a disk-like structure with a central cavity, resembling the structure of eukaryotic proteasomes.</text>
</comment>
<comment type="subcellular location">
    <subcellularLocation>
        <location evidence="1">Cytoplasm</location>
    </subcellularLocation>
</comment>
<comment type="similarity">
    <text evidence="1">Belongs to the peptidase S14 family.</text>
</comment>
<proteinExistence type="inferred from homology"/>
<reference key="1">
    <citation type="submission" date="2005-07" db="EMBL/GenBank/DDBJ databases">
        <title>Complete sequence of Synechococcus sp. CC9605.</title>
        <authorList>
            <consortium name="US DOE Joint Genome Institute"/>
            <person name="Copeland A."/>
            <person name="Lucas S."/>
            <person name="Lapidus A."/>
            <person name="Barry K."/>
            <person name="Detter J.C."/>
            <person name="Glavina T."/>
            <person name="Hammon N."/>
            <person name="Israni S."/>
            <person name="Pitluck S."/>
            <person name="Schmutz J."/>
            <person name="Martinez M."/>
            <person name="Larimer F."/>
            <person name="Land M."/>
            <person name="Kyrpides N."/>
            <person name="Ivanova N."/>
            <person name="Richardson P."/>
        </authorList>
    </citation>
    <scope>NUCLEOTIDE SEQUENCE [LARGE SCALE GENOMIC DNA]</scope>
    <source>
        <strain>CC9605</strain>
    </source>
</reference>
<evidence type="ECO:0000255" key="1">
    <source>
        <dbReference type="HAMAP-Rule" id="MF_00444"/>
    </source>
</evidence>
<sequence>MPIGTPSVPYRLPGSQMERWVDIYTRLGVERILFLGSEVNDGIANSLVAQMLYLDSEDSSKPIYLYINSPGGSVTAGLAIYDTIQYVKSEVVTICVGLAASMGAFLLAAGTKGKRVALPHSRIMIHQPLGGTSRRQASDIEIEAREILRMKEMLNRSLSDMSGQSFEKIEKDTDRDYFLSAEEAKEYGLIDRVISHPNEA</sequence>
<accession>Q3ALC4</accession>
<dbReference type="EC" id="3.4.21.92" evidence="1"/>
<dbReference type="EMBL" id="CP000110">
    <property type="protein sequence ID" value="ABB34608.1"/>
    <property type="molecule type" value="Genomic_DNA"/>
</dbReference>
<dbReference type="RefSeq" id="WP_011363833.1">
    <property type="nucleotide sequence ID" value="NC_007516.1"/>
</dbReference>
<dbReference type="SMR" id="Q3ALC4"/>
<dbReference type="STRING" id="110662.Syncc9605_0840"/>
<dbReference type="MEROPS" id="S14.001"/>
<dbReference type="KEGG" id="syd:Syncc9605_0840"/>
<dbReference type="eggNOG" id="COG0740">
    <property type="taxonomic scope" value="Bacteria"/>
</dbReference>
<dbReference type="HOGENOM" id="CLU_058707_3_2_3"/>
<dbReference type="OrthoDB" id="571524at2"/>
<dbReference type="GO" id="GO:0005737">
    <property type="term" value="C:cytoplasm"/>
    <property type="evidence" value="ECO:0007669"/>
    <property type="project" value="UniProtKB-SubCell"/>
</dbReference>
<dbReference type="GO" id="GO:0009368">
    <property type="term" value="C:endopeptidase Clp complex"/>
    <property type="evidence" value="ECO:0007669"/>
    <property type="project" value="TreeGrafter"/>
</dbReference>
<dbReference type="GO" id="GO:0004176">
    <property type="term" value="F:ATP-dependent peptidase activity"/>
    <property type="evidence" value="ECO:0007669"/>
    <property type="project" value="InterPro"/>
</dbReference>
<dbReference type="GO" id="GO:0051117">
    <property type="term" value="F:ATPase binding"/>
    <property type="evidence" value="ECO:0007669"/>
    <property type="project" value="TreeGrafter"/>
</dbReference>
<dbReference type="GO" id="GO:0004252">
    <property type="term" value="F:serine-type endopeptidase activity"/>
    <property type="evidence" value="ECO:0007669"/>
    <property type="project" value="UniProtKB-UniRule"/>
</dbReference>
<dbReference type="GO" id="GO:0006515">
    <property type="term" value="P:protein quality control for misfolded or incompletely synthesized proteins"/>
    <property type="evidence" value="ECO:0007669"/>
    <property type="project" value="TreeGrafter"/>
</dbReference>
<dbReference type="CDD" id="cd07017">
    <property type="entry name" value="S14_ClpP_2"/>
    <property type="match status" value="1"/>
</dbReference>
<dbReference type="FunFam" id="3.90.226.10:FF:000001">
    <property type="entry name" value="ATP-dependent Clp protease proteolytic subunit"/>
    <property type="match status" value="1"/>
</dbReference>
<dbReference type="Gene3D" id="3.90.226.10">
    <property type="entry name" value="2-enoyl-CoA Hydratase, Chain A, domain 1"/>
    <property type="match status" value="1"/>
</dbReference>
<dbReference type="HAMAP" id="MF_00444">
    <property type="entry name" value="ClpP"/>
    <property type="match status" value="1"/>
</dbReference>
<dbReference type="InterPro" id="IPR001907">
    <property type="entry name" value="ClpP"/>
</dbReference>
<dbReference type="InterPro" id="IPR029045">
    <property type="entry name" value="ClpP/crotonase-like_dom_sf"/>
</dbReference>
<dbReference type="InterPro" id="IPR023562">
    <property type="entry name" value="ClpP/TepA"/>
</dbReference>
<dbReference type="InterPro" id="IPR033135">
    <property type="entry name" value="ClpP_His_AS"/>
</dbReference>
<dbReference type="InterPro" id="IPR018215">
    <property type="entry name" value="ClpP_Ser_AS"/>
</dbReference>
<dbReference type="NCBIfam" id="NF001368">
    <property type="entry name" value="PRK00277.1"/>
    <property type="match status" value="1"/>
</dbReference>
<dbReference type="NCBIfam" id="NF009205">
    <property type="entry name" value="PRK12553.1"/>
    <property type="match status" value="1"/>
</dbReference>
<dbReference type="PANTHER" id="PTHR10381">
    <property type="entry name" value="ATP-DEPENDENT CLP PROTEASE PROTEOLYTIC SUBUNIT"/>
    <property type="match status" value="1"/>
</dbReference>
<dbReference type="PANTHER" id="PTHR10381:SF70">
    <property type="entry name" value="ATP-DEPENDENT CLP PROTEASE PROTEOLYTIC SUBUNIT"/>
    <property type="match status" value="1"/>
</dbReference>
<dbReference type="Pfam" id="PF00574">
    <property type="entry name" value="CLP_protease"/>
    <property type="match status" value="1"/>
</dbReference>
<dbReference type="PRINTS" id="PR00127">
    <property type="entry name" value="CLPPROTEASEP"/>
</dbReference>
<dbReference type="SUPFAM" id="SSF52096">
    <property type="entry name" value="ClpP/crotonase"/>
    <property type="match status" value="1"/>
</dbReference>
<dbReference type="PROSITE" id="PS00382">
    <property type="entry name" value="CLP_PROTEASE_HIS"/>
    <property type="match status" value="1"/>
</dbReference>
<dbReference type="PROSITE" id="PS00381">
    <property type="entry name" value="CLP_PROTEASE_SER"/>
    <property type="match status" value="1"/>
</dbReference>
<gene>
    <name evidence="1" type="primary">clpP3</name>
    <name type="ordered locus">Syncc9605_0840</name>
</gene>
<organism>
    <name type="scientific">Synechococcus sp. (strain CC9605)</name>
    <dbReference type="NCBI Taxonomy" id="110662"/>
    <lineage>
        <taxon>Bacteria</taxon>
        <taxon>Bacillati</taxon>
        <taxon>Cyanobacteriota</taxon>
        <taxon>Cyanophyceae</taxon>
        <taxon>Synechococcales</taxon>
        <taxon>Synechococcaceae</taxon>
        <taxon>Synechococcus</taxon>
    </lineage>
</organism>
<protein>
    <recommendedName>
        <fullName evidence="1">ATP-dependent Clp protease proteolytic subunit 3</fullName>
        <ecNumber evidence="1">3.4.21.92</ecNumber>
    </recommendedName>
    <alternativeName>
        <fullName evidence="1">Endopeptidase Clp 3</fullName>
    </alternativeName>
</protein>
<name>CLPP3_SYNSC</name>